<proteinExistence type="inferred from homology"/>
<organism>
    <name type="scientific">Neurospora crassa (strain ATCC 24698 / 74-OR23-1A / CBS 708.71 / DSM 1257 / FGSC 987)</name>
    <dbReference type="NCBI Taxonomy" id="367110"/>
    <lineage>
        <taxon>Eukaryota</taxon>
        <taxon>Fungi</taxon>
        <taxon>Dikarya</taxon>
        <taxon>Ascomycota</taxon>
        <taxon>Pezizomycotina</taxon>
        <taxon>Sordariomycetes</taxon>
        <taxon>Sordariomycetidae</taxon>
        <taxon>Sordariales</taxon>
        <taxon>Sordariaceae</taxon>
        <taxon>Neurospora</taxon>
    </lineage>
</organism>
<gene>
    <name type="primary">adi1</name>
    <name type="ORF">NCU00147</name>
</gene>
<evidence type="ECO:0000255" key="1">
    <source>
        <dbReference type="HAMAP-Rule" id="MF_03154"/>
    </source>
</evidence>
<protein>
    <recommendedName>
        <fullName evidence="1">Acireductone dioxygenase</fullName>
    </recommendedName>
    <alternativeName>
        <fullName evidence="1">Acireductone dioxygenase (Fe(2+)-requiring)</fullName>
        <shortName evidence="1">ARD'</shortName>
        <shortName evidence="1">Fe-ARD</shortName>
        <ecNumber evidence="1">1.13.11.54</ecNumber>
    </alternativeName>
    <alternativeName>
        <fullName evidence="1">Acireductone dioxygenase (Ni(2+)-requiring)</fullName>
        <shortName evidence="1">ARD</shortName>
        <shortName evidence="1">Ni-ARD</shortName>
        <ecNumber evidence="1">1.13.11.53</ecNumber>
    </alternativeName>
</protein>
<comment type="function">
    <text evidence="1">Catalyzes 2 different reactions between oxygen and the acireductone 1,2-dihydroxy-3-keto-5-methylthiopentene (DHK-MTPene) depending upon the metal bound in the active site. Fe-containing acireductone dioxygenase (Fe-ARD) produces formate and 2-keto-4-methylthiobutyrate (KMTB), the alpha-ketoacid precursor of methionine in the methionine recycle pathway. Ni-containing acireductone dioxygenase (Ni-ARD) produces methylthiopropionate, carbon monoxide and formate, and does not lie on the methionine recycle pathway.</text>
</comment>
<comment type="catalytic activity">
    <reaction evidence="1">
        <text>1,2-dihydroxy-5-(methylsulfanyl)pent-1-en-3-one + O2 = 4-methylsulfanyl-2-oxobutanoate + formate + 2 H(+)</text>
        <dbReference type="Rhea" id="RHEA:24504"/>
        <dbReference type="ChEBI" id="CHEBI:15378"/>
        <dbReference type="ChEBI" id="CHEBI:15379"/>
        <dbReference type="ChEBI" id="CHEBI:15740"/>
        <dbReference type="ChEBI" id="CHEBI:16723"/>
        <dbReference type="ChEBI" id="CHEBI:49252"/>
        <dbReference type="EC" id="1.13.11.54"/>
    </reaction>
</comment>
<comment type="catalytic activity">
    <reaction evidence="1">
        <text>1,2-dihydroxy-5-(methylsulfanyl)pent-1-en-3-one + O2 = 3-(methylsulfanyl)propanoate + CO + formate + 2 H(+)</text>
        <dbReference type="Rhea" id="RHEA:14161"/>
        <dbReference type="ChEBI" id="CHEBI:15378"/>
        <dbReference type="ChEBI" id="CHEBI:15379"/>
        <dbReference type="ChEBI" id="CHEBI:15740"/>
        <dbReference type="ChEBI" id="CHEBI:17245"/>
        <dbReference type="ChEBI" id="CHEBI:49016"/>
        <dbReference type="ChEBI" id="CHEBI:49252"/>
        <dbReference type="EC" id="1.13.11.53"/>
    </reaction>
</comment>
<comment type="cofactor">
    <cofactor evidence="1">
        <name>Fe(2+)</name>
        <dbReference type="ChEBI" id="CHEBI:29033"/>
    </cofactor>
    <cofactor evidence="1">
        <name>Ni(2+)</name>
        <dbReference type="ChEBI" id="CHEBI:49786"/>
    </cofactor>
    <text evidence="1">Binds either 1 Fe or Ni cation per monomer. Iron-binding promotes an acireductone dioxygenase reaction producing 2-keto-4-methylthiobutyrate, while nickel-binding promotes an acireductone dioxygenase reaction producing 3-(methylsulfanyl)propanoate.</text>
</comment>
<comment type="pathway">
    <text evidence="1">Amino-acid biosynthesis; L-methionine biosynthesis via salvage pathway; L-methionine from S-methyl-5-thio-alpha-D-ribose 1-phosphate: step 5/6.</text>
</comment>
<comment type="subcellular location">
    <subcellularLocation>
        <location evidence="1">Cytoplasm</location>
    </subcellularLocation>
    <subcellularLocation>
        <location evidence="1">Nucleus</location>
    </subcellularLocation>
</comment>
<comment type="similarity">
    <text evidence="1">Belongs to the acireductone dioxygenase (ARD) family.</text>
</comment>
<dbReference type="EC" id="1.13.11.54" evidence="1"/>
<dbReference type="EC" id="1.13.11.53" evidence="1"/>
<dbReference type="EMBL" id="CM002238">
    <property type="protein sequence ID" value="EAA27424.1"/>
    <property type="molecule type" value="Genomic_DNA"/>
</dbReference>
<dbReference type="RefSeq" id="XP_956660.1">
    <property type="nucleotide sequence ID" value="XM_951567.2"/>
</dbReference>
<dbReference type="SMR" id="Q7RXR1"/>
<dbReference type="FunCoup" id="Q7RXR1">
    <property type="interactions" value="245"/>
</dbReference>
<dbReference type="STRING" id="367110.Q7RXR1"/>
<dbReference type="PaxDb" id="5141-EFNCRP00000000186"/>
<dbReference type="EnsemblFungi" id="EAA27424">
    <property type="protein sequence ID" value="EAA27424"/>
    <property type="gene ID" value="NCU00147"/>
</dbReference>
<dbReference type="GeneID" id="3872807"/>
<dbReference type="KEGG" id="ncr:NCU00147"/>
<dbReference type="VEuPathDB" id="FungiDB:NCU00147"/>
<dbReference type="HOGENOM" id="CLU_090154_1_0_1"/>
<dbReference type="InParanoid" id="Q7RXR1"/>
<dbReference type="OrthoDB" id="1867259at2759"/>
<dbReference type="UniPathway" id="UPA00904">
    <property type="reaction ID" value="UER00878"/>
</dbReference>
<dbReference type="Proteomes" id="UP000001805">
    <property type="component" value="Chromosome 3, Linkage Group III"/>
</dbReference>
<dbReference type="GO" id="GO:0005737">
    <property type="term" value="C:cytoplasm"/>
    <property type="evidence" value="ECO:0007669"/>
    <property type="project" value="UniProtKB-SubCell"/>
</dbReference>
<dbReference type="GO" id="GO:0005634">
    <property type="term" value="C:nucleus"/>
    <property type="evidence" value="ECO:0007669"/>
    <property type="project" value="UniProtKB-SubCell"/>
</dbReference>
<dbReference type="GO" id="GO:0010308">
    <property type="term" value="F:acireductone dioxygenase (Ni2+-requiring) activity"/>
    <property type="evidence" value="ECO:0007669"/>
    <property type="project" value="UniProtKB-UniRule"/>
</dbReference>
<dbReference type="GO" id="GO:0010309">
    <property type="term" value="F:acireductone dioxygenase [iron(II)-requiring] activity"/>
    <property type="evidence" value="ECO:0000318"/>
    <property type="project" value="GO_Central"/>
</dbReference>
<dbReference type="GO" id="GO:0005506">
    <property type="term" value="F:iron ion binding"/>
    <property type="evidence" value="ECO:0007669"/>
    <property type="project" value="UniProtKB-UniRule"/>
</dbReference>
<dbReference type="GO" id="GO:0016151">
    <property type="term" value="F:nickel cation binding"/>
    <property type="evidence" value="ECO:0007669"/>
    <property type="project" value="UniProtKB-UniRule"/>
</dbReference>
<dbReference type="GO" id="GO:0019509">
    <property type="term" value="P:L-methionine salvage from methylthioadenosine"/>
    <property type="evidence" value="ECO:0007669"/>
    <property type="project" value="UniProtKB-UniRule"/>
</dbReference>
<dbReference type="GO" id="GO:0006555">
    <property type="term" value="P:methionine metabolic process"/>
    <property type="evidence" value="ECO:0000318"/>
    <property type="project" value="GO_Central"/>
</dbReference>
<dbReference type="CDD" id="cd02232">
    <property type="entry name" value="cupin_ARD"/>
    <property type="match status" value="1"/>
</dbReference>
<dbReference type="FunFam" id="2.60.120.10:FF:000079">
    <property type="entry name" value="1,2-dihydroxy-3-keto-5-methylthiopentene dioxygenase"/>
    <property type="match status" value="1"/>
</dbReference>
<dbReference type="Gene3D" id="2.60.120.10">
    <property type="entry name" value="Jelly Rolls"/>
    <property type="match status" value="1"/>
</dbReference>
<dbReference type="HAMAP" id="MF_03154">
    <property type="entry name" value="Salvage_MtnD_euk"/>
    <property type="match status" value="1"/>
</dbReference>
<dbReference type="InterPro" id="IPR004313">
    <property type="entry name" value="ARD"/>
</dbReference>
<dbReference type="InterPro" id="IPR027496">
    <property type="entry name" value="ARD_euk"/>
</dbReference>
<dbReference type="InterPro" id="IPR014710">
    <property type="entry name" value="RmlC-like_jellyroll"/>
</dbReference>
<dbReference type="InterPro" id="IPR011051">
    <property type="entry name" value="RmlC_Cupin_sf"/>
</dbReference>
<dbReference type="PANTHER" id="PTHR23418">
    <property type="entry name" value="ACIREDUCTONE DIOXYGENASE"/>
    <property type="match status" value="1"/>
</dbReference>
<dbReference type="PANTHER" id="PTHR23418:SF0">
    <property type="entry name" value="ACIREDUCTONE DIOXYGENASE"/>
    <property type="match status" value="1"/>
</dbReference>
<dbReference type="Pfam" id="PF03079">
    <property type="entry name" value="ARD"/>
    <property type="match status" value="1"/>
</dbReference>
<dbReference type="SUPFAM" id="SSF51182">
    <property type="entry name" value="RmlC-like cupins"/>
    <property type="match status" value="1"/>
</dbReference>
<reference key="1">
    <citation type="journal article" date="2003" name="Nature">
        <title>The genome sequence of the filamentous fungus Neurospora crassa.</title>
        <authorList>
            <person name="Galagan J.E."/>
            <person name="Calvo S.E."/>
            <person name="Borkovich K.A."/>
            <person name="Selker E.U."/>
            <person name="Read N.D."/>
            <person name="Jaffe D.B."/>
            <person name="FitzHugh W."/>
            <person name="Ma L.-J."/>
            <person name="Smirnov S."/>
            <person name="Purcell S."/>
            <person name="Rehman B."/>
            <person name="Elkins T."/>
            <person name="Engels R."/>
            <person name="Wang S."/>
            <person name="Nielsen C.B."/>
            <person name="Butler J."/>
            <person name="Endrizzi M."/>
            <person name="Qui D."/>
            <person name="Ianakiev P."/>
            <person name="Bell-Pedersen D."/>
            <person name="Nelson M.A."/>
            <person name="Werner-Washburne M."/>
            <person name="Selitrennikoff C.P."/>
            <person name="Kinsey J.A."/>
            <person name="Braun E.L."/>
            <person name="Zelter A."/>
            <person name="Schulte U."/>
            <person name="Kothe G.O."/>
            <person name="Jedd G."/>
            <person name="Mewes H.-W."/>
            <person name="Staben C."/>
            <person name="Marcotte E."/>
            <person name="Greenberg D."/>
            <person name="Roy A."/>
            <person name="Foley K."/>
            <person name="Naylor J."/>
            <person name="Stange-Thomann N."/>
            <person name="Barrett R."/>
            <person name="Gnerre S."/>
            <person name="Kamal M."/>
            <person name="Kamvysselis M."/>
            <person name="Mauceli E.W."/>
            <person name="Bielke C."/>
            <person name="Rudd S."/>
            <person name="Frishman D."/>
            <person name="Krystofova S."/>
            <person name="Rasmussen C."/>
            <person name="Metzenberg R.L."/>
            <person name="Perkins D.D."/>
            <person name="Kroken S."/>
            <person name="Cogoni C."/>
            <person name="Macino G."/>
            <person name="Catcheside D.E.A."/>
            <person name="Li W."/>
            <person name="Pratt R.J."/>
            <person name="Osmani S.A."/>
            <person name="DeSouza C.P.C."/>
            <person name="Glass N.L."/>
            <person name="Orbach M.J."/>
            <person name="Berglund J.A."/>
            <person name="Voelker R."/>
            <person name="Yarden O."/>
            <person name="Plamann M."/>
            <person name="Seiler S."/>
            <person name="Dunlap J.C."/>
            <person name="Radford A."/>
            <person name="Aramayo R."/>
            <person name="Natvig D.O."/>
            <person name="Alex L.A."/>
            <person name="Mannhaupt G."/>
            <person name="Ebbole D.J."/>
            <person name="Freitag M."/>
            <person name="Paulsen I."/>
            <person name="Sachs M.S."/>
            <person name="Lander E.S."/>
            <person name="Nusbaum C."/>
            <person name="Birren B.W."/>
        </authorList>
    </citation>
    <scope>NUCLEOTIDE SEQUENCE [LARGE SCALE GENOMIC DNA]</scope>
    <source>
        <strain>ATCC 24698 / 74-OR23-1A / CBS 708.71 / DSM 1257 / FGSC 987</strain>
    </source>
</reference>
<sequence>MKAYFYDNLPGDQRLPHDSGKEVTVAELEKVGVLYFRFPDVEGVNTLAAERGYKNRDEIIVSPEKMGAIYETKVRQFFDEHLHEDEEIRYIRDGAGYFDVRNEGDEWIRIKLVKDDLIILPAGIYHRFTTDDTNYIQAMRLFKEEPKWTPLNRTEGLDENPYRQEYVTQFLKAQAEQA</sequence>
<feature type="chain" id="PRO_0000414363" description="Acireductone dioxygenase">
    <location>
        <begin position="1"/>
        <end position="178"/>
    </location>
</feature>
<feature type="binding site" evidence="1">
    <location>
        <position position="81"/>
    </location>
    <ligand>
        <name>Fe(2+)</name>
        <dbReference type="ChEBI" id="CHEBI:29033"/>
        <note>for iron-dependent acireductone dioxygenase activity</note>
    </ligand>
</feature>
<feature type="binding site" evidence="1">
    <location>
        <position position="81"/>
    </location>
    <ligand>
        <name>Ni(2+)</name>
        <dbReference type="ChEBI" id="CHEBI:49786"/>
        <note>for nickel-dependent acireductone dioxygenase activity</note>
    </ligand>
</feature>
<feature type="binding site" evidence="1">
    <location>
        <position position="83"/>
    </location>
    <ligand>
        <name>Fe(2+)</name>
        <dbReference type="ChEBI" id="CHEBI:29033"/>
        <note>for iron-dependent acireductone dioxygenase activity</note>
    </ligand>
</feature>
<feature type="binding site" evidence="1">
    <location>
        <position position="83"/>
    </location>
    <ligand>
        <name>Ni(2+)</name>
        <dbReference type="ChEBI" id="CHEBI:49786"/>
        <note>for nickel-dependent acireductone dioxygenase activity</note>
    </ligand>
</feature>
<feature type="binding site" evidence="1">
    <location>
        <position position="87"/>
    </location>
    <ligand>
        <name>Fe(2+)</name>
        <dbReference type="ChEBI" id="CHEBI:29033"/>
        <note>for iron-dependent acireductone dioxygenase activity</note>
    </ligand>
</feature>
<feature type="binding site" evidence="1">
    <location>
        <position position="87"/>
    </location>
    <ligand>
        <name>Ni(2+)</name>
        <dbReference type="ChEBI" id="CHEBI:49786"/>
        <note>for nickel-dependent acireductone dioxygenase activity</note>
    </ligand>
</feature>
<feature type="binding site" evidence="1">
    <location>
        <position position="126"/>
    </location>
    <ligand>
        <name>Fe(2+)</name>
        <dbReference type="ChEBI" id="CHEBI:29033"/>
        <note>for iron-dependent acireductone dioxygenase activity</note>
    </ligand>
</feature>
<feature type="binding site" evidence="1">
    <location>
        <position position="126"/>
    </location>
    <ligand>
        <name>Ni(2+)</name>
        <dbReference type="ChEBI" id="CHEBI:49786"/>
        <note>for nickel-dependent acireductone dioxygenase activity</note>
    </ligand>
</feature>
<keyword id="KW-0028">Amino-acid biosynthesis</keyword>
<keyword id="KW-0963">Cytoplasm</keyword>
<keyword id="KW-0223">Dioxygenase</keyword>
<keyword id="KW-0408">Iron</keyword>
<keyword id="KW-0479">Metal-binding</keyword>
<keyword id="KW-0486">Methionine biosynthesis</keyword>
<keyword id="KW-0533">Nickel</keyword>
<keyword id="KW-0539">Nucleus</keyword>
<keyword id="KW-0560">Oxidoreductase</keyword>
<keyword id="KW-1185">Reference proteome</keyword>
<accession>Q7RXR1</accession>
<name>MTND_NEUCR</name>